<comment type="function">
    <text evidence="1">Converts the preformed base xanthine, a product of nucleic acid breakdown, to xanthosine 5'-monophosphate (XMP), so it can be reused for RNA or DNA synthesis.</text>
</comment>
<comment type="catalytic activity">
    <reaction evidence="1">
        <text>XMP + diphosphate = xanthine + 5-phospho-alpha-D-ribose 1-diphosphate</text>
        <dbReference type="Rhea" id="RHEA:10800"/>
        <dbReference type="ChEBI" id="CHEBI:17712"/>
        <dbReference type="ChEBI" id="CHEBI:33019"/>
        <dbReference type="ChEBI" id="CHEBI:57464"/>
        <dbReference type="ChEBI" id="CHEBI:58017"/>
        <dbReference type="EC" id="2.4.2.22"/>
    </reaction>
</comment>
<comment type="pathway">
    <text evidence="1">Purine metabolism; XMP biosynthesis via salvage pathway; XMP from xanthine: step 1/1.</text>
</comment>
<comment type="subunit">
    <text evidence="1">Homodimer.</text>
</comment>
<comment type="subcellular location">
    <subcellularLocation>
        <location evidence="1">Cytoplasm</location>
    </subcellularLocation>
</comment>
<comment type="similarity">
    <text evidence="1">Belongs to the purine/pyrimidine phosphoribosyltransferase family. Xpt subfamily.</text>
</comment>
<accession>C1C9B2</accession>
<proteinExistence type="inferred from homology"/>
<dbReference type="EC" id="2.4.2.22" evidence="1"/>
<dbReference type="EMBL" id="CP000918">
    <property type="protein sequence ID" value="ACO15946.1"/>
    <property type="molecule type" value="Genomic_DNA"/>
</dbReference>
<dbReference type="RefSeq" id="WP_000770408.1">
    <property type="nucleotide sequence ID" value="NC_012468.1"/>
</dbReference>
<dbReference type="SMR" id="C1C9B2"/>
<dbReference type="KEGG" id="snm:SP70585_1901"/>
<dbReference type="HOGENOM" id="CLU_099015_0_0_9"/>
<dbReference type="UniPathway" id="UPA00602">
    <property type="reaction ID" value="UER00658"/>
</dbReference>
<dbReference type="Proteomes" id="UP000002211">
    <property type="component" value="Chromosome"/>
</dbReference>
<dbReference type="GO" id="GO:0005737">
    <property type="term" value="C:cytoplasm"/>
    <property type="evidence" value="ECO:0007669"/>
    <property type="project" value="UniProtKB-SubCell"/>
</dbReference>
<dbReference type="GO" id="GO:0000310">
    <property type="term" value="F:xanthine phosphoribosyltransferase activity"/>
    <property type="evidence" value="ECO:0007669"/>
    <property type="project" value="UniProtKB-UniRule"/>
</dbReference>
<dbReference type="GO" id="GO:0006166">
    <property type="term" value="P:purine ribonucleoside salvage"/>
    <property type="evidence" value="ECO:0007669"/>
    <property type="project" value="UniProtKB-KW"/>
</dbReference>
<dbReference type="GO" id="GO:0046110">
    <property type="term" value="P:xanthine metabolic process"/>
    <property type="evidence" value="ECO:0007669"/>
    <property type="project" value="InterPro"/>
</dbReference>
<dbReference type="GO" id="GO:0032265">
    <property type="term" value="P:XMP salvage"/>
    <property type="evidence" value="ECO:0007669"/>
    <property type="project" value="UniProtKB-UniRule"/>
</dbReference>
<dbReference type="CDD" id="cd06223">
    <property type="entry name" value="PRTases_typeI"/>
    <property type="match status" value="1"/>
</dbReference>
<dbReference type="Gene3D" id="3.40.50.2020">
    <property type="match status" value="1"/>
</dbReference>
<dbReference type="HAMAP" id="MF_01184">
    <property type="entry name" value="XPRTase"/>
    <property type="match status" value="1"/>
</dbReference>
<dbReference type="InterPro" id="IPR000836">
    <property type="entry name" value="PRibTrfase_dom"/>
</dbReference>
<dbReference type="InterPro" id="IPR029057">
    <property type="entry name" value="PRTase-like"/>
</dbReference>
<dbReference type="InterPro" id="IPR050118">
    <property type="entry name" value="Pur/Pyrimidine_PRTase"/>
</dbReference>
<dbReference type="InterPro" id="IPR010079">
    <property type="entry name" value="Xanthine_PRibTrfase"/>
</dbReference>
<dbReference type="NCBIfam" id="NF006671">
    <property type="entry name" value="PRK09219.1"/>
    <property type="match status" value="1"/>
</dbReference>
<dbReference type="NCBIfam" id="TIGR01744">
    <property type="entry name" value="XPRTase"/>
    <property type="match status" value="1"/>
</dbReference>
<dbReference type="PANTHER" id="PTHR43864">
    <property type="entry name" value="HYPOXANTHINE/GUANINE PHOSPHORIBOSYLTRANSFERASE"/>
    <property type="match status" value="1"/>
</dbReference>
<dbReference type="PANTHER" id="PTHR43864:SF1">
    <property type="entry name" value="XANTHINE PHOSPHORIBOSYLTRANSFERASE"/>
    <property type="match status" value="1"/>
</dbReference>
<dbReference type="Pfam" id="PF00156">
    <property type="entry name" value="Pribosyltran"/>
    <property type="match status" value="1"/>
</dbReference>
<dbReference type="SUPFAM" id="SSF53271">
    <property type="entry name" value="PRTase-like"/>
    <property type="match status" value="1"/>
</dbReference>
<organism>
    <name type="scientific">Streptococcus pneumoniae (strain 70585)</name>
    <dbReference type="NCBI Taxonomy" id="488221"/>
    <lineage>
        <taxon>Bacteria</taxon>
        <taxon>Bacillati</taxon>
        <taxon>Bacillota</taxon>
        <taxon>Bacilli</taxon>
        <taxon>Lactobacillales</taxon>
        <taxon>Streptococcaceae</taxon>
        <taxon>Streptococcus</taxon>
    </lineage>
</organism>
<keyword id="KW-0963">Cytoplasm</keyword>
<keyword id="KW-0328">Glycosyltransferase</keyword>
<keyword id="KW-0660">Purine salvage</keyword>
<keyword id="KW-0808">Transferase</keyword>
<name>XPT_STRP7</name>
<sequence>MKLLEERILKDGHILGDNILKVDSFLTHQVDFSLMREIGKVFAEKFAATGITKVVTIEASGIAPAVFTAEALNVPMIFAKKAKNITMNEGILTAQVYSFTKQVTSTVSIAGKFLSPEDKVLIIDDFLANGQAAKGLIQIIEQAGATVQAIGIVIEKSFQDGRDLLEKAGYPVLSLARLDRFENGQVVFKEADL</sequence>
<feature type="chain" id="PRO_1000164455" description="Xanthine phosphoribosyltransferase">
    <location>
        <begin position="1"/>
        <end position="193"/>
    </location>
</feature>
<feature type="binding site" evidence="1">
    <location>
        <position position="20"/>
    </location>
    <ligand>
        <name>xanthine</name>
        <dbReference type="ChEBI" id="CHEBI:17712"/>
    </ligand>
</feature>
<feature type="binding site" evidence="1">
    <location>
        <position position="27"/>
    </location>
    <ligand>
        <name>xanthine</name>
        <dbReference type="ChEBI" id="CHEBI:17712"/>
    </ligand>
</feature>
<feature type="binding site" evidence="1">
    <location>
        <begin position="128"/>
        <end position="132"/>
    </location>
    <ligand>
        <name>5-phospho-alpha-D-ribose 1-diphosphate</name>
        <dbReference type="ChEBI" id="CHEBI:58017"/>
    </ligand>
</feature>
<feature type="binding site" evidence="1">
    <location>
        <position position="156"/>
    </location>
    <ligand>
        <name>xanthine</name>
        <dbReference type="ChEBI" id="CHEBI:17712"/>
    </ligand>
</feature>
<gene>
    <name evidence="1" type="primary">xpt</name>
    <name type="ordered locus">SP70585_1901</name>
</gene>
<evidence type="ECO:0000255" key="1">
    <source>
        <dbReference type="HAMAP-Rule" id="MF_01184"/>
    </source>
</evidence>
<protein>
    <recommendedName>
        <fullName evidence="1">Xanthine phosphoribosyltransferase</fullName>
        <shortName evidence="1">XPRTase</shortName>
        <ecNumber evidence="1">2.4.2.22</ecNumber>
    </recommendedName>
</protein>
<reference key="1">
    <citation type="journal article" date="2010" name="Genome Biol.">
        <title>Structure and dynamics of the pan-genome of Streptococcus pneumoniae and closely related species.</title>
        <authorList>
            <person name="Donati C."/>
            <person name="Hiller N.L."/>
            <person name="Tettelin H."/>
            <person name="Muzzi A."/>
            <person name="Croucher N.J."/>
            <person name="Angiuoli S.V."/>
            <person name="Oggioni M."/>
            <person name="Dunning Hotopp J.C."/>
            <person name="Hu F.Z."/>
            <person name="Riley D.R."/>
            <person name="Covacci A."/>
            <person name="Mitchell T.J."/>
            <person name="Bentley S.D."/>
            <person name="Kilian M."/>
            <person name="Ehrlich G.D."/>
            <person name="Rappuoli R."/>
            <person name="Moxon E.R."/>
            <person name="Masignani V."/>
        </authorList>
    </citation>
    <scope>NUCLEOTIDE SEQUENCE [LARGE SCALE GENOMIC DNA]</scope>
    <source>
        <strain>70585</strain>
    </source>
</reference>